<feature type="chain" id="PRO_1000048500" description="DNA replication and repair protein RecF">
    <location>
        <begin position="1"/>
        <end position="369"/>
    </location>
</feature>
<feature type="binding site" evidence="1">
    <location>
        <begin position="30"/>
        <end position="37"/>
    </location>
    <ligand>
        <name>ATP</name>
        <dbReference type="ChEBI" id="CHEBI:30616"/>
    </ligand>
</feature>
<protein>
    <recommendedName>
        <fullName evidence="1">DNA replication and repair protein RecF</fullName>
    </recommendedName>
</protein>
<gene>
    <name evidence="1" type="primary">recF</name>
    <name type="ordered locus">Anae109_0003</name>
</gene>
<name>RECF_ANADF</name>
<organism>
    <name type="scientific">Anaeromyxobacter sp. (strain Fw109-5)</name>
    <dbReference type="NCBI Taxonomy" id="404589"/>
    <lineage>
        <taxon>Bacteria</taxon>
        <taxon>Pseudomonadati</taxon>
        <taxon>Myxococcota</taxon>
        <taxon>Myxococcia</taxon>
        <taxon>Myxococcales</taxon>
        <taxon>Cystobacterineae</taxon>
        <taxon>Anaeromyxobacteraceae</taxon>
        <taxon>Anaeromyxobacter</taxon>
    </lineage>
</organism>
<dbReference type="EMBL" id="CP000769">
    <property type="protein sequence ID" value="ABS24223.1"/>
    <property type="molecule type" value="Genomic_DNA"/>
</dbReference>
<dbReference type="RefSeq" id="WP_011984329.1">
    <property type="nucleotide sequence ID" value="NC_009675.1"/>
</dbReference>
<dbReference type="SMR" id="A7H677"/>
<dbReference type="STRING" id="404589.Anae109_0003"/>
<dbReference type="KEGG" id="afw:Anae109_0003"/>
<dbReference type="eggNOG" id="COG1195">
    <property type="taxonomic scope" value="Bacteria"/>
</dbReference>
<dbReference type="HOGENOM" id="CLU_040267_0_1_7"/>
<dbReference type="OrthoDB" id="9803889at2"/>
<dbReference type="Proteomes" id="UP000006382">
    <property type="component" value="Chromosome"/>
</dbReference>
<dbReference type="GO" id="GO:0005737">
    <property type="term" value="C:cytoplasm"/>
    <property type="evidence" value="ECO:0007669"/>
    <property type="project" value="UniProtKB-SubCell"/>
</dbReference>
<dbReference type="GO" id="GO:0005524">
    <property type="term" value="F:ATP binding"/>
    <property type="evidence" value="ECO:0007669"/>
    <property type="project" value="UniProtKB-UniRule"/>
</dbReference>
<dbReference type="GO" id="GO:0003697">
    <property type="term" value="F:single-stranded DNA binding"/>
    <property type="evidence" value="ECO:0007669"/>
    <property type="project" value="UniProtKB-UniRule"/>
</dbReference>
<dbReference type="GO" id="GO:0006260">
    <property type="term" value="P:DNA replication"/>
    <property type="evidence" value="ECO:0007669"/>
    <property type="project" value="UniProtKB-UniRule"/>
</dbReference>
<dbReference type="GO" id="GO:0000731">
    <property type="term" value="P:DNA synthesis involved in DNA repair"/>
    <property type="evidence" value="ECO:0007669"/>
    <property type="project" value="TreeGrafter"/>
</dbReference>
<dbReference type="GO" id="GO:0006302">
    <property type="term" value="P:double-strand break repair"/>
    <property type="evidence" value="ECO:0007669"/>
    <property type="project" value="TreeGrafter"/>
</dbReference>
<dbReference type="GO" id="GO:0009432">
    <property type="term" value="P:SOS response"/>
    <property type="evidence" value="ECO:0007669"/>
    <property type="project" value="UniProtKB-UniRule"/>
</dbReference>
<dbReference type="Gene3D" id="3.40.50.300">
    <property type="entry name" value="P-loop containing nucleotide triphosphate hydrolases"/>
    <property type="match status" value="1"/>
</dbReference>
<dbReference type="Gene3D" id="1.20.1050.90">
    <property type="entry name" value="RecF/RecN/SMC, N-terminal domain"/>
    <property type="match status" value="1"/>
</dbReference>
<dbReference type="HAMAP" id="MF_00365">
    <property type="entry name" value="RecF"/>
    <property type="match status" value="1"/>
</dbReference>
<dbReference type="InterPro" id="IPR001238">
    <property type="entry name" value="DNA-binding_RecF"/>
</dbReference>
<dbReference type="InterPro" id="IPR018078">
    <property type="entry name" value="DNA-binding_RecF_CS"/>
</dbReference>
<dbReference type="InterPro" id="IPR027417">
    <property type="entry name" value="P-loop_NTPase"/>
</dbReference>
<dbReference type="InterPro" id="IPR003395">
    <property type="entry name" value="RecF/RecN/SMC_N"/>
</dbReference>
<dbReference type="InterPro" id="IPR042174">
    <property type="entry name" value="RecF_2"/>
</dbReference>
<dbReference type="NCBIfam" id="TIGR00611">
    <property type="entry name" value="recf"/>
    <property type="match status" value="1"/>
</dbReference>
<dbReference type="PANTHER" id="PTHR32182">
    <property type="entry name" value="DNA REPLICATION AND REPAIR PROTEIN RECF"/>
    <property type="match status" value="1"/>
</dbReference>
<dbReference type="PANTHER" id="PTHR32182:SF0">
    <property type="entry name" value="DNA REPLICATION AND REPAIR PROTEIN RECF"/>
    <property type="match status" value="1"/>
</dbReference>
<dbReference type="Pfam" id="PF02463">
    <property type="entry name" value="SMC_N"/>
    <property type="match status" value="1"/>
</dbReference>
<dbReference type="SUPFAM" id="SSF52540">
    <property type="entry name" value="P-loop containing nucleoside triphosphate hydrolases"/>
    <property type="match status" value="1"/>
</dbReference>
<dbReference type="PROSITE" id="PS00617">
    <property type="entry name" value="RECF_1"/>
    <property type="match status" value="1"/>
</dbReference>
<dbReference type="PROSITE" id="PS00618">
    <property type="entry name" value="RECF_2"/>
    <property type="match status" value="1"/>
</dbReference>
<sequence>MKLLSLAVQDFRNLAQVELLPSPRATVLLGENGQGKTNLLEAIYFLTTLKPLRTARLAELVRHGAQTGLVAGDFDGPGGTRRVAVQVAPGGRVALLDGKPQERLDAYFDGLAAVCFAPDDLLLVKGGPEGRRRFLDRAAFNRWPAVLGEAREYVRALRARNAALRGGSPEVEASFRGPLVRAGARIVRRRRDLVEELAPRVSTAFREISGPAAPEARFAYRPAAGVQAEVGEAELAERLEHALAQRLERDRDRGFTSVGPHMDELVLALDGRGARAYASQGQQRALVLALKIAEIENLRAALGRPPLLLLDDVSSELDPTKNRYLLAYLAALPAQAFLTTTDRRLIEPAAGPDTAFYKVEGGMVSPLIS</sequence>
<proteinExistence type="inferred from homology"/>
<evidence type="ECO:0000255" key="1">
    <source>
        <dbReference type="HAMAP-Rule" id="MF_00365"/>
    </source>
</evidence>
<reference key="1">
    <citation type="journal article" date="2015" name="Genome Announc.">
        <title>Complete genome sequence of Anaeromyxobacter sp. Fw109-5, an anaerobic, metal-reducing bacterium isolated from a contaminated subsurface environment.</title>
        <authorList>
            <person name="Hwang C."/>
            <person name="Copeland A."/>
            <person name="Lucas S."/>
            <person name="Lapidus A."/>
            <person name="Barry K."/>
            <person name="Glavina Del Rio T."/>
            <person name="Dalin E."/>
            <person name="Tice H."/>
            <person name="Pitluck S."/>
            <person name="Sims D."/>
            <person name="Brettin T."/>
            <person name="Bruce D.C."/>
            <person name="Detter J.C."/>
            <person name="Han C.S."/>
            <person name="Schmutz J."/>
            <person name="Larimer F.W."/>
            <person name="Land M.L."/>
            <person name="Hauser L.J."/>
            <person name="Kyrpides N."/>
            <person name="Lykidis A."/>
            <person name="Richardson P."/>
            <person name="Belieav A."/>
            <person name="Sanford R.A."/>
            <person name="Loeffler F.E."/>
            <person name="Fields M.W."/>
        </authorList>
    </citation>
    <scope>NUCLEOTIDE SEQUENCE [LARGE SCALE GENOMIC DNA]</scope>
    <source>
        <strain>Fw109-5</strain>
    </source>
</reference>
<keyword id="KW-0067">ATP-binding</keyword>
<keyword id="KW-0963">Cytoplasm</keyword>
<keyword id="KW-0227">DNA damage</keyword>
<keyword id="KW-0234">DNA repair</keyword>
<keyword id="KW-0235">DNA replication</keyword>
<keyword id="KW-0238">DNA-binding</keyword>
<keyword id="KW-0547">Nucleotide-binding</keyword>
<keyword id="KW-1185">Reference proteome</keyword>
<keyword id="KW-0742">SOS response</keyword>
<comment type="function">
    <text evidence="1">The RecF protein is involved in DNA metabolism; it is required for DNA replication and normal SOS inducibility. RecF binds preferentially to single-stranded, linear DNA. It also seems to bind ATP.</text>
</comment>
<comment type="subcellular location">
    <subcellularLocation>
        <location evidence="1">Cytoplasm</location>
    </subcellularLocation>
</comment>
<comment type="similarity">
    <text evidence="1">Belongs to the RecF family.</text>
</comment>
<accession>A7H677</accession>